<evidence type="ECO:0000255" key="1">
    <source>
        <dbReference type="HAMAP-Rule" id="MF_00252"/>
    </source>
</evidence>
<proteinExistence type="inferred from homology"/>
<accession>Q2IPX5</accession>
<gene>
    <name evidence="1" type="primary">lysS</name>
    <name type="ordered locus">Adeh_1078</name>
</gene>
<sequence>MADELGTTEREIIAQRLKKAEALRALGVNPFGNGWQPRHLAEELLRHHGDQPAEEIAKAPGDWSLAGRVLAVRSFGKAAFLRVRDRSAELQVWVKKDRVGDQAFEVFKLLDIGDIVGAEGPATRTKTGELTLEARTFTILTKATRPLPEKWHGLTDVEQRYRQRYVDLVVTPGVREAFVKRARIVSGIRRFLDARGYLEVETPTLHKPEEAGGAAARPFETHHNALDLDLKLRIATELHLKRLVVGGLDRVYEIGRIWRNEGIDRRHNPEFTSIEFYQAYATHEDLMRLTEELMHQLAVEVTGGPVVTFQGQAIDLTPPYPRVSMLEVGARALGLAPDDALAGRGLAEALSRAAARENDSEDAWKLEQAAKKTPGEAVALAFEIFGEPQLPKDRPAFVVDFPLETSPLSRRRDADPRLVDRFELFAAGMELANAFSELNDPADQRARFEAQMRAKAAGDEEAMPYDEDFVRALEHGMPPTAGEGIGIDRLAMLFTDSASIRDVILFPLLKSRD</sequence>
<organism>
    <name type="scientific">Anaeromyxobacter dehalogenans (strain 2CP-C)</name>
    <dbReference type="NCBI Taxonomy" id="290397"/>
    <lineage>
        <taxon>Bacteria</taxon>
        <taxon>Pseudomonadati</taxon>
        <taxon>Myxococcota</taxon>
        <taxon>Myxococcia</taxon>
        <taxon>Myxococcales</taxon>
        <taxon>Cystobacterineae</taxon>
        <taxon>Anaeromyxobacteraceae</taxon>
        <taxon>Anaeromyxobacter</taxon>
    </lineage>
</organism>
<comment type="catalytic activity">
    <reaction evidence="1">
        <text>tRNA(Lys) + L-lysine + ATP = L-lysyl-tRNA(Lys) + AMP + diphosphate</text>
        <dbReference type="Rhea" id="RHEA:20792"/>
        <dbReference type="Rhea" id="RHEA-COMP:9696"/>
        <dbReference type="Rhea" id="RHEA-COMP:9697"/>
        <dbReference type="ChEBI" id="CHEBI:30616"/>
        <dbReference type="ChEBI" id="CHEBI:32551"/>
        <dbReference type="ChEBI" id="CHEBI:33019"/>
        <dbReference type="ChEBI" id="CHEBI:78442"/>
        <dbReference type="ChEBI" id="CHEBI:78529"/>
        <dbReference type="ChEBI" id="CHEBI:456215"/>
        <dbReference type="EC" id="6.1.1.6"/>
    </reaction>
</comment>
<comment type="cofactor">
    <cofactor evidence="1">
        <name>Mg(2+)</name>
        <dbReference type="ChEBI" id="CHEBI:18420"/>
    </cofactor>
    <text evidence="1">Binds 3 Mg(2+) ions per subunit.</text>
</comment>
<comment type="subunit">
    <text evidence="1">Homodimer.</text>
</comment>
<comment type="subcellular location">
    <subcellularLocation>
        <location evidence="1">Cytoplasm</location>
    </subcellularLocation>
</comment>
<comment type="similarity">
    <text evidence="1">Belongs to the class-II aminoacyl-tRNA synthetase family.</text>
</comment>
<reference key="1">
    <citation type="submission" date="2006-01" db="EMBL/GenBank/DDBJ databases">
        <title>Complete sequence of Anaeromyxobacter dehalogenans 2CP-C.</title>
        <authorList>
            <person name="Copeland A."/>
            <person name="Lucas S."/>
            <person name="Lapidus A."/>
            <person name="Barry K."/>
            <person name="Detter J.C."/>
            <person name="Glavina T."/>
            <person name="Hammon N."/>
            <person name="Israni S."/>
            <person name="Pitluck S."/>
            <person name="Brettin T."/>
            <person name="Bruce D."/>
            <person name="Han C."/>
            <person name="Tapia R."/>
            <person name="Gilna P."/>
            <person name="Kiss H."/>
            <person name="Schmutz J."/>
            <person name="Larimer F."/>
            <person name="Land M."/>
            <person name="Kyrpides N."/>
            <person name="Anderson I."/>
            <person name="Sanford R.A."/>
            <person name="Ritalahti K.M."/>
            <person name="Thomas H.S."/>
            <person name="Kirby J.R."/>
            <person name="Zhulin I.B."/>
            <person name="Loeffler F.E."/>
            <person name="Richardson P."/>
        </authorList>
    </citation>
    <scope>NUCLEOTIDE SEQUENCE [LARGE SCALE GENOMIC DNA]</scope>
    <source>
        <strain>2CP-C</strain>
    </source>
</reference>
<name>SYK_ANADE</name>
<keyword id="KW-0030">Aminoacyl-tRNA synthetase</keyword>
<keyword id="KW-0067">ATP-binding</keyword>
<keyword id="KW-0963">Cytoplasm</keyword>
<keyword id="KW-0436">Ligase</keyword>
<keyword id="KW-0460">Magnesium</keyword>
<keyword id="KW-0479">Metal-binding</keyword>
<keyword id="KW-0547">Nucleotide-binding</keyword>
<keyword id="KW-0648">Protein biosynthesis</keyword>
<keyword id="KW-1185">Reference proteome</keyword>
<protein>
    <recommendedName>
        <fullName evidence="1">Lysine--tRNA ligase</fullName>
        <ecNumber evidence="1">6.1.1.6</ecNumber>
    </recommendedName>
    <alternativeName>
        <fullName evidence="1">Lysyl-tRNA synthetase</fullName>
        <shortName evidence="1">LysRS</shortName>
    </alternativeName>
</protein>
<feature type="chain" id="PRO_1000101095" description="Lysine--tRNA ligase">
    <location>
        <begin position="1"/>
        <end position="513"/>
    </location>
</feature>
<feature type="binding site" evidence="1">
    <location>
        <position position="423"/>
    </location>
    <ligand>
        <name>Mg(2+)</name>
        <dbReference type="ChEBI" id="CHEBI:18420"/>
        <label>1</label>
    </ligand>
</feature>
<feature type="binding site" evidence="1">
    <location>
        <position position="430"/>
    </location>
    <ligand>
        <name>Mg(2+)</name>
        <dbReference type="ChEBI" id="CHEBI:18420"/>
        <label>1</label>
    </ligand>
</feature>
<feature type="binding site" evidence="1">
    <location>
        <position position="430"/>
    </location>
    <ligand>
        <name>Mg(2+)</name>
        <dbReference type="ChEBI" id="CHEBI:18420"/>
        <label>2</label>
    </ligand>
</feature>
<dbReference type="EC" id="6.1.1.6" evidence="1"/>
<dbReference type="EMBL" id="CP000251">
    <property type="protein sequence ID" value="ABC80853.1"/>
    <property type="molecule type" value="Genomic_DNA"/>
</dbReference>
<dbReference type="RefSeq" id="WP_011420136.1">
    <property type="nucleotide sequence ID" value="NC_007760.1"/>
</dbReference>
<dbReference type="SMR" id="Q2IPX5"/>
<dbReference type="STRING" id="290397.Adeh_1078"/>
<dbReference type="KEGG" id="ade:Adeh_1078"/>
<dbReference type="eggNOG" id="COG1190">
    <property type="taxonomic scope" value="Bacteria"/>
</dbReference>
<dbReference type="HOGENOM" id="CLU_008255_6_0_7"/>
<dbReference type="OrthoDB" id="9802326at2"/>
<dbReference type="Proteomes" id="UP000001935">
    <property type="component" value="Chromosome"/>
</dbReference>
<dbReference type="GO" id="GO:0005829">
    <property type="term" value="C:cytosol"/>
    <property type="evidence" value="ECO:0007669"/>
    <property type="project" value="TreeGrafter"/>
</dbReference>
<dbReference type="GO" id="GO:0005524">
    <property type="term" value="F:ATP binding"/>
    <property type="evidence" value="ECO:0007669"/>
    <property type="project" value="UniProtKB-UniRule"/>
</dbReference>
<dbReference type="GO" id="GO:0004824">
    <property type="term" value="F:lysine-tRNA ligase activity"/>
    <property type="evidence" value="ECO:0007669"/>
    <property type="project" value="UniProtKB-UniRule"/>
</dbReference>
<dbReference type="GO" id="GO:0000287">
    <property type="term" value="F:magnesium ion binding"/>
    <property type="evidence" value="ECO:0007669"/>
    <property type="project" value="UniProtKB-UniRule"/>
</dbReference>
<dbReference type="GO" id="GO:0000049">
    <property type="term" value="F:tRNA binding"/>
    <property type="evidence" value="ECO:0007669"/>
    <property type="project" value="TreeGrafter"/>
</dbReference>
<dbReference type="GO" id="GO:0006430">
    <property type="term" value="P:lysyl-tRNA aminoacylation"/>
    <property type="evidence" value="ECO:0007669"/>
    <property type="project" value="UniProtKB-UniRule"/>
</dbReference>
<dbReference type="CDD" id="cd00775">
    <property type="entry name" value="LysRS_core"/>
    <property type="match status" value="1"/>
</dbReference>
<dbReference type="CDD" id="cd04322">
    <property type="entry name" value="LysRS_N"/>
    <property type="match status" value="1"/>
</dbReference>
<dbReference type="FunFam" id="2.40.50.140:FF:000024">
    <property type="entry name" value="Lysine--tRNA ligase"/>
    <property type="match status" value="1"/>
</dbReference>
<dbReference type="Gene3D" id="3.30.930.10">
    <property type="entry name" value="Bira Bifunctional Protein, Domain 2"/>
    <property type="match status" value="1"/>
</dbReference>
<dbReference type="Gene3D" id="2.40.50.140">
    <property type="entry name" value="Nucleic acid-binding proteins"/>
    <property type="match status" value="1"/>
</dbReference>
<dbReference type="HAMAP" id="MF_00252">
    <property type="entry name" value="Lys_tRNA_synth_class2"/>
    <property type="match status" value="1"/>
</dbReference>
<dbReference type="InterPro" id="IPR004364">
    <property type="entry name" value="Aa-tRNA-synt_II"/>
</dbReference>
<dbReference type="InterPro" id="IPR006195">
    <property type="entry name" value="aa-tRNA-synth_II"/>
</dbReference>
<dbReference type="InterPro" id="IPR045864">
    <property type="entry name" value="aa-tRNA-synth_II/BPL/LPL"/>
</dbReference>
<dbReference type="InterPro" id="IPR002313">
    <property type="entry name" value="Lys-tRNA-ligase_II"/>
</dbReference>
<dbReference type="InterPro" id="IPR044136">
    <property type="entry name" value="Lys-tRNA-ligase_II_N"/>
</dbReference>
<dbReference type="InterPro" id="IPR018149">
    <property type="entry name" value="Lys-tRNA-synth_II_C"/>
</dbReference>
<dbReference type="InterPro" id="IPR012340">
    <property type="entry name" value="NA-bd_OB-fold"/>
</dbReference>
<dbReference type="InterPro" id="IPR004365">
    <property type="entry name" value="NA-bd_OB_tRNA"/>
</dbReference>
<dbReference type="NCBIfam" id="TIGR00499">
    <property type="entry name" value="lysS_bact"/>
    <property type="match status" value="1"/>
</dbReference>
<dbReference type="NCBIfam" id="NF001756">
    <property type="entry name" value="PRK00484.1"/>
    <property type="match status" value="1"/>
</dbReference>
<dbReference type="PANTHER" id="PTHR42918:SF15">
    <property type="entry name" value="LYSINE--TRNA LIGASE, CHLOROPLASTIC_MITOCHONDRIAL"/>
    <property type="match status" value="1"/>
</dbReference>
<dbReference type="PANTHER" id="PTHR42918">
    <property type="entry name" value="LYSYL-TRNA SYNTHETASE"/>
    <property type="match status" value="1"/>
</dbReference>
<dbReference type="Pfam" id="PF00152">
    <property type="entry name" value="tRNA-synt_2"/>
    <property type="match status" value="1"/>
</dbReference>
<dbReference type="Pfam" id="PF01336">
    <property type="entry name" value="tRNA_anti-codon"/>
    <property type="match status" value="1"/>
</dbReference>
<dbReference type="PRINTS" id="PR00982">
    <property type="entry name" value="TRNASYNTHLYS"/>
</dbReference>
<dbReference type="SUPFAM" id="SSF55681">
    <property type="entry name" value="Class II aaRS and biotin synthetases"/>
    <property type="match status" value="1"/>
</dbReference>
<dbReference type="SUPFAM" id="SSF50249">
    <property type="entry name" value="Nucleic acid-binding proteins"/>
    <property type="match status" value="1"/>
</dbReference>
<dbReference type="PROSITE" id="PS50862">
    <property type="entry name" value="AA_TRNA_LIGASE_II"/>
    <property type="match status" value="1"/>
</dbReference>